<keyword id="KW-0007">Acetylation</keyword>
<keyword id="KW-0507">mRNA processing</keyword>
<keyword id="KW-0508">mRNA splicing</keyword>
<keyword id="KW-0539">Nucleus</keyword>
<keyword id="KW-0597">Phosphoprotein</keyword>
<keyword id="KW-1185">Reference proteome</keyword>
<keyword id="KW-0677">Repeat</keyword>
<keyword id="KW-0694">RNA-binding</keyword>
<keyword id="KW-0804">Transcription</keyword>
<keyword id="KW-0805">Transcription regulation</keyword>
<protein>
    <recommendedName>
        <fullName>Serine/arginine-rich splicing factor 5</fullName>
    </recommendedName>
    <alternativeName>
        <fullName>Delayed-early protein HRS</fullName>
    </alternativeName>
    <alternativeName>
        <fullName>Pre-mRNA-splicing factor SRP40</fullName>
    </alternativeName>
    <alternativeName>
        <fullName>Splicing factor, arginine/serine-rich 5</fullName>
    </alternativeName>
</protein>
<accession>O35326</accession>
<accession>Q640L9</accession>
<gene>
    <name type="primary">Srsf5</name>
    <name type="synonym">Hrs</name>
    <name type="synonym">Sfrs5</name>
</gene>
<dbReference type="EMBL" id="AF020308">
    <property type="protein sequence ID" value="AAC39946.1"/>
    <property type="molecule type" value="Genomic_DNA"/>
</dbReference>
<dbReference type="EMBL" id="AK146624">
    <property type="protein sequence ID" value="BAE27313.1"/>
    <property type="molecule type" value="mRNA"/>
</dbReference>
<dbReference type="EMBL" id="AC125092">
    <property type="status" value="NOT_ANNOTATED_CDS"/>
    <property type="molecule type" value="Genomic_DNA"/>
</dbReference>
<dbReference type="EMBL" id="CH466590">
    <property type="protein sequence ID" value="EDL02685.1"/>
    <property type="molecule type" value="Genomic_DNA"/>
</dbReference>
<dbReference type="EMBL" id="CH466590">
    <property type="protein sequence ID" value="EDL02687.1"/>
    <property type="molecule type" value="Genomic_DNA"/>
</dbReference>
<dbReference type="EMBL" id="CH466590">
    <property type="protein sequence ID" value="EDL02690.1"/>
    <property type="molecule type" value="Genomic_DNA"/>
</dbReference>
<dbReference type="EMBL" id="CH466590">
    <property type="protein sequence ID" value="EDL02692.1"/>
    <property type="molecule type" value="Genomic_DNA"/>
</dbReference>
<dbReference type="EMBL" id="CH466590">
    <property type="protein sequence ID" value="EDL02693.1"/>
    <property type="molecule type" value="Genomic_DNA"/>
</dbReference>
<dbReference type="EMBL" id="BC082593">
    <property type="protein sequence ID" value="AAH82593.1"/>
    <property type="molecule type" value="mRNA"/>
</dbReference>
<dbReference type="CCDS" id="CCDS36484.1"/>
<dbReference type="RefSeq" id="NP_001073162.1">
    <property type="nucleotide sequence ID" value="NM_001079694.3"/>
</dbReference>
<dbReference type="RefSeq" id="NP_001073163.1">
    <property type="nucleotide sequence ID" value="NM_001079695.3"/>
</dbReference>
<dbReference type="RefSeq" id="NP_001334345.1">
    <property type="nucleotide sequence ID" value="NM_001347416.1"/>
</dbReference>
<dbReference type="RefSeq" id="NP_033185.2">
    <property type="nucleotide sequence ID" value="NM_009159.4"/>
</dbReference>
<dbReference type="SMR" id="O35326"/>
<dbReference type="BioGRID" id="203190">
    <property type="interactions" value="17"/>
</dbReference>
<dbReference type="DIP" id="DIP-48724N"/>
<dbReference type="FunCoup" id="O35326">
    <property type="interactions" value="4783"/>
</dbReference>
<dbReference type="IntAct" id="O35326">
    <property type="interactions" value="2"/>
</dbReference>
<dbReference type="MINT" id="O35326"/>
<dbReference type="STRING" id="10090.ENSMUSP00000105980"/>
<dbReference type="GlyGen" id="O35326">
    <property type="glycosylation" value="1 site, 1 O-linked glycan (1 site)"/>
</dbReference>
<dbReference type="iPTMnet" id="O35326"/>
<dbReference type="PhosphoSitePlus" id="O35326"/>
<dbReference type="SwissPalm" id="O35326"/>
<dbReference type="jPOST" id="O35326"/>
<dbReference type="PaxDb" id="10090-ENSMUSP00000105985"/>
<dbReference type="PeptideAtlas" id="O35326"/>
<dbReference type="ProteomicsDB" id="257414"/>
<dbReference type="Pumba" id="O35326"/>
<dbReference type="Antibodypedia" id="25065">
    <property type="antibodies" value="113 antibodies from 26 providers"/>
</dbReference>
<dbReference type="DNASU" id="20384"/>
<dbReference type="Ensembl" id="ENSMUST00000094693.11">
    <property type="protein sequence ID" value="ENSMUSP00000131323.2"/>
    <property type="gene ID" value="ENSMUSG00000021134.18"/>
</dbReference>
<dbReference type="Ensembl" id="ENSMUST00000110352.10">
    <property type="protein sequence ID" value="ENSMUSP00000105981.4"/>
    <property type="gene ID" value="ENSMUSG00000021134.18"/>
</dbReference>
<dbReference type="Ensembl" id="ENSMUST00000110356.3">
    <property type="protein sequence ID" value="ENSMUSP00000105985.3"/>
    <property type="gene ID" value="ENSMUSG00000021134.18"/>
</dbReference>
<dbReference type="GeneID" id="20384"/>
<dbReference type="KEGG" id="mmu:20384"/>
<dbReference type="UCSC" id="uc007obo.1">
    <property type="organism name" value="mouse"/>
</dbReference>
<dbReference type="AGR" id="MGI:98287"/>
<dbReference type="CTD" id="6430"/>
<dbReference type="MGI" id="MGI:98287">
    <property type="gene designation" value="Srsf5"/>
</dbReference>
<dbReference type="VEuPathDB" id="HostDB:ENSMUSG00000021134"/>
<dbReference type="eggNOG" id="KOG0106">
    <property type="taxonomic scope" value="Eukaryota"/>
</dbReference>
<dbReference type="GeneTree" id="ENSGT00940000158275"/>
<dbReference type="HOGENOM" id="CLU_012062_34_2_1"/>
<dbReference type="InParanoid" id="O35326"/>
<dbReference type="OMA" id="HRPKVNE"/>
<dbReference type="OrthoDB" id="1099063at2759"/>
<dbReference type="TreeFam" id="TF351335"/>
<dbReference type="Reactome" id="R-MMU-159236">
    <property type="pathway name" value="Transport of Mature mRNA derived from an Intron-Containing Transcript"/>
</dbReference>
<dbReference type="Reactome" id="R-MMU-72163">
    <property type="pathway name" value="mRNA Splicing - Major Pathway"/>
</dbReference>
<dbReference type="Reactome" id="R-MMU-72187">
    <property type="pathway name" value="mRNA 3'-end processing"/>
</dbReference>
<dbReference type="Reactome" id="R-MMU-72203">
    <property type="pathway name" value="Processing of Capped Intron-Containing Pre-mRNA"/>
</dbReference>
<dbReference type="Reactome" id="R-MMU-73856">
    <property type="pathway name" value="RNA Polymerase II Transcription Termination"/>
</dbReference>
<dbReference type="BioGRID-ORCS" id="20384">
    <property type="hits" value="12 hits in 77 CRISPR screens"/>
</dbReference>
<dbReference type="ChiTaRS" id="Srsf5">
    <property type="organism name" value="mouse"/>
</dbReference>
<dbReference type="PRO" id="PR:O35326"/>
<dbReference type="Proteomes" id="UP000000589">
    <property type="component" value="Chromosome 12"/>
</dbReference>
<dbReference type="RNAct" id="O35326">
    <property type="molecule type" value="protein"/>
</dbReference>
<dbReference type="Bgee" id="ENSMUSG00000021134">
    <property type="expression patterns" value="Expressed in retinal neural layer and 77 other cell types or tissues"/>
</dbReference>
<dbReference type="ExpressionAtlas" id="O35326">
    <property type="expression patterns" value="baseline and differential"/>
</dbReference>
<dbReference type="GO" id="GO:0016607">
    <property type="term" value="C:nuclear speck"/>
    <property type="evidence" value="ECO:0000314"/>
    <property type="project" value="UniProtKB"/>
</dbReference>
<dbReference type="GO" id="GO:0003723">
    <property type="term" value="F:RNA binding"/>
    <property type="evidence" value="ECO:0007669"/>
    <property type="project" value="UniProtKB-KW"/>
</dbReference>
<dbReference type="GO" id="GO:0050733">
    <property type="term" value="F:RS domain binding"/>
    <property type="evidence" value="ECO:0000353"/>
    <property type="project" value="MGI"/>
</dbReference>
<dbReference type="GO" id="GO:0006397">
    <property type="term" value="P:mRNA processing"/>
    <property type="evidence" value="ECO:0007669"/>
    <property type="project" value="UniProtKB-KW"/>
</dbReference>
<dbReference type="GO" id="GO:0009611">
    <property type="term" value="P:response to wounding"/>
    <property type="evidence" value="ECO:0000314"/>
    <property type="project" value="MGI"/>
</dbReference>
<dbReference type="GO" id="GO:0008380">
    <property type="term" value="P:RNA splicing"/>
    <property type="evidence" value="ECO:0007669"/>
    <property type="project" value="UniProtKB-KW"/>
</dbReference>
<dbReference type="CDD" id="cd12595">
    <property type="entry name" value="RRM1_SRSF5"/>
    <property type="match status" value="1"/>
</dbReference>
<dbReference type="CDD" id="cd12765">
    <property type="entry name" value="RRM2_SRSF5"/>
    <property type="match status" value="1"/>
</dbReference>
<dbReference type="FunFam" id="3.30.70.330:FF:000028">
    <property type="entry name" value="Putative serine/arginine-rich splicing factor 4"/>
    <property type="match status" value="1"/>
</dbReference>
<dbReference type="FunFam" id="3.30.70.330:FF:000138">
    <property type="entry name" value="Serine/arginine-rich splicing factor 5 alpha"/>
    <property type="match status" value="1"/>
</dbReference>
<dbReference type="Gene3D" id="3.30.70.330">
    <property type="match status" value="2"/>
</dbReference>
<dbReference type="InterPro" id="IPR012677">
    <property type="entry name" value="Nucleotide-bd_a/b_plait_sf"/>
</dbReference>
<dbReference type="InterPro" id="IPR035979">
    <property type="entry name" value="RBD_domain_sf"/>
</dbReference>
<dbReference type="InterPro" id="IPR000504">
    <property type="entry name" value="RRM_dom"/>
</dbReference>
<dbReference type="InterPro" id="IPR050374">
    <property type="entry name" value="RRT5_SRSF_SR"/>
</dbReference>
<dbReference type="PANTHER" id="PTHR23003">
    <property type="entry name" value="RNA RECOGNITION MOTIF RRM DOMAIN CONTAINING PROTEIN"/>
    <property type="match status" value="1"/>
</dbReference>
<dbReference type="PANTHER" id="PTHR23003:SF59">
    <property type="entry name" value="SERINE AND ARGININE RICH SPLICING FACTOR 5"/>
    <property type="match status" value="1"/>
</dbReference>
<dbReference type="Pfam" id="PF00076">
    <property type="entry name" value="RRM_1"/>
    <property type="match status" value="2"/>
</dbReference>
<dbReference type="SMART" id="SM00360">
    <property type="entry name" value="RRM"/>
    <property type="match status" value="2"/>
</dbReference>
<dbReference type="SUPFAM" id="SSF54928">
    <property type="entry name" value="RNA-binding domain, RBD"/>
    <property type="match status" value="1"/>
</dbReference>
<dbReference type="PROSITE" id="PS50102">
    <property type="entry name" value="RRM"/>
    <property type="match status" value="2"/>
</dbReference>
<name>SRSF5_MOUSE</name>
<feature type="chain" id="PRO_0000081928" description="Serine/arginine-rich splicing factor 5">
    <location>
        <begin position="1"/>
        <end position="269"/>
    </location>
</feature>
<feature type="domain" description="RRM 1" evidence="3">
    <location>
        <begin position="4"/>
        <end position="74"/>
    </location>
</feature>
<feature type="domain" description="RRM 2" evidence="3">
    <location>
        <begin position="108"/>
        <end position="189"/>
    </location>
</feature>
<feature type="region of interest" description="Disordered" evidence="4">
    <location>
        <begin position="73"/>
        <end position="105"/>
    </location>
</feature>
<feature type="region of interest" description="Disordered" evidence="4">
    <location>
        <begin position="174"/>
        <end position="269"/>
    </location>
</feature>
<feature type="compositionally biased region" description="Basic residues" evidence="4">
    <location>
        <begin position="74"/>
        <end position="83"/>
    </location>
</feature>
<feature type="compositionally biased region" description="Basic residues" evidence="4">
    <location>
        <begin position="181"/>
        <end position="226"/>
    </location>
</feature>
<feature type="compositionally biased region" description="Low complexity" evidence="4">
    <location>
        <begin position="239"/>
        <end position="251"/>
    </location>
</feature>
<feature type="modified residue" description="Phosphoserine" evidence="2">
    <location>
        <position position="86"/>
    </location>
</feature>
<feature type="modified residue" description="N6-acetyllysine" evidence="8">
    <location>
        <position position="167"/>
    </location>
</feature>
<feature type="modified residue" description="Phosphoserine" evidence="2">
    <location>
        <position position="224"/>
    </location>
</feature>
<feature type="modified residue" description="Phosphoserine" evidence="2">
    <location>
        <position position="226"/>
    </location>
</feature>
<feature type="modified residue" description="Phosphoserine" evidence="2">
    <location>
        <position position="230"/>
    </location>
</feature>
<feature type="modified residue" description="Phosphoserine" evidence="2">
    <location>
        <position position="247"/>
    </location>
</feature>
<feature type="modified residue" description="Phosphoserine" evidence="2">
    <location>
        <position position="250"/>
    </location>
</feature>
<organism>
    <name type="scientific">Mus musculus</name>
    <name type="common">Mouse</name>
    <dbReference type="NCBI Taxonomy" id="10090"/>
    <lineage>
        <taxon>Eukaryota</taxon>
        <taxon>Metazoa</taxon>
        <taxon>Chordata</taxon>
        <taxon>Craniata</taxon>
        <taxon>Vertebrata</taxon>
        <taxon>Euteleostomi</taxon>
        <taxon>Mammalia</taxon>
        <taxon>Eutheria</taxon>
        <taxon>Euarchontoglires</taxon>
        <taxon>Glires</taxon>
        <taxon>Rodentia</taxon>
        <taxon>Myomorpha</taxon>
        <taxon>Muroidea</taxon>
        <taxon>Muridae</taxon>
        <taxon>Murinae</taxon>
        <taxon>Mus</taxon>
        <taxon>Mus</taxon>
    </lineage>
</organism>
<comment type="function">
    <text evidence="1">May be required for progression through G1 and entry into S phase of cell growth. May play a regulatory role in pre-mRNA splicing. Autoregulates its own expression. Plays a role in constitutive splicing and can modulate the selection of alternative splice sites (By similarity).</text>
</comment>
<comment type="subunit">
    <text evidence="1 5 6">Found in a pre-mRNA splicing complex with SRSF4/SFRS4, SRSF5/SFRS5, SNRNP70, SNRPA1, SRRM1 and SRRM2 (By similarity). Interacts with RBMY; the interaction inhibits SRSF5 pre-mRNA splicing (PubMed:10823932). Interacts (via RS domain) with PHF5A (via N-terminus).</text>
</comment>
<comment type="subcellular location">
    <subcellularLocation>
        <location evidence="7">Nucleus</location>
    </subcellularLocation>
</comment>
<comment type="PTM">
    <text evidence="1">Extensively phosphorylated on serine residues in the RS domain.</text>
</comment>
<comment type="similarity">
    <text evidence="7">Belongs to the splicing factor SR family.</text>
</comment>
<proteinExistence type="evidence at protein level"/>
<sequence>MSGCRVFIGRLNPAAREKDVERFFKGYGRIRDIDLKRGFGFVEFEDPRDADDAVYELDGKELCSERVTIEHARARSRGGRGRGRYSDRFSSRRPRNDRRNAPPVRTENRLIVENLSSRVSWQDLKDFMRQAGEVTFADAHRPKLNEGVVEFASYGDLKNAIEKLSGKEINGRKIKLIEGSKRHRSRSRSRSRTRSSSRSRSRSRSRRSKSYSRSRSRSRSRSKSRSGSRSPVPEKSQKRGSSSRSKSPASVDRQRSRSRSRSRSVDSGN</sequence>
<reference key="1">
    <citation type="journal article" date="1997" name="Gene">
        <title>Alternative splicing and structure of the human and mouse SFRS5/HRS/SRp40 genes.</title>
        <authorList>
            <person name="Du K."/>
            <person name="Taub R."/>
        </authorList>
    </citation>
    <scope>NUCLEOTIDE SEQUENCE [GENOMIC DNA]</scope>
    <source>
        <tissue>Liver</tissue>
    </source>
</reference>
<reference key="2">
    <citation type="journal article" date="2005" name="Science">
        <title>The transcriptional landscape of the mammalian genome.</title>
        <authorList>
            <person name="Carninci P."/>
            <person name="Kasukawa T."/>
            <person name="Katayama S."/>
            <person name="Gough J."/>
            <person name="Frith M.C."/>
            <person name="Maeda N."/>
            <person name="Oyama R."/>
            <person name="Ravasi T."/>
            <person name="Lenhard B."/>
            <person name="Wells C."/>
            <person name="Kodzius R."/>
            <person name="Shimokawa K."/>
            <person name="Bajic V.B."/>
            <person name="Brenner S.E."/>
            <person name="Batalov S."/>
            <person name="Forrest A.R."/>
            <person name="Zavolan M."/>
            <person name="Davis M.J."/>
            <person name="Wilming L.G."/>
            <person name="Aidinis V."/>
            <person name="Allen J.E."/>
            <person name="Ambesi-Impiombato A."/>
            <person name="Apweiler R."/>
            <person name="Aturaliya R.N."/>
            <person name="Bailey T.L."/>
            <person name="Bansal M."/>
            <person name="Baxter L."/>
            <person name="Beisel K.W."/>
            <person name="Bersano T."/>
            <person name="Bono H."/>
            <person name="Chalk A.M."/>
            <person name="Chiu K.P."/>
            <person name="Choudhary V."/>
            <person name="Christoffels A."/>
            <person name="Clutterbuck D.R."/>
            <person name="Crowe M.L."/>
            <person name="Dalla E."/>
            <person name="Dalrymple B.P."/>
            <person name="de Bono B."/>
            <person name="Della Gatta G."/>
            <person name="di Bernardo D."/>
            <person name="Down T."/>
            <person name="Engstrom P."/>
            <person name="Fagiolini M."/>
            <person name="Faulkner G."/>
            <person name="Fletcher C.F."/>
            <person name="Fukushima T."/>
            <person name="Furuno M."/>
            <person name="Futaki S."/>
            <person name="Gariboldi M."/>
            <person name="Georgii-Hemming P."/>
            <person name="Gingeras T.R."/>
            <person name="Gojobori T."/>
            <person name="Green R.E."/>
            <person name="Gustincich S."/>
            <person name="Harbers M."/>
            <person name="Hayashi Y."/>
            <person name="Hensch T.K."/>
            <person name="Hirokawa N."/>
            <person name="Hill D."/>
            <person name="Huminiecki L."/>
            <person name="Iacono M."/>
            <person name="Ikeo K."/>
            <person name="Iwama A."/>
            <person name="Ishikawa T."/>
            <person name="Jakt M."/>
            <person name="Kanapin A."/>
            <person name="Katoh M."/>
            <person name="Kawasawa Y."/>
            <person name="Kelso J."/>
            <person name="Kitamura H."/>
            <person name="Kitano H."/>
            <person name="Kollias G."/>
            <person name="Krishnan S.P."/>
            <person name="Kruger A."/>
            <person name="Kummerfeld S.K."/>
            <person name="Kurochkin I.V."/>
            <person name="Lareau L.F."/>
            <person name="Lazarevic D."/>
            <person name="Lipovich L."/>
            <person name="Liu J."/>
            <person name="Liuni S."/>
            <person name="McWilliam S."/>
            <person name="Madan Babu M."/>
            <person name="Madera M."/>
            <person name="Marchionni L."/>
            <person name="Matsuda H."/>
            <person name="Matsuzawa S."/>
            <person name="Miki H."/>
            <person name="Mignone F."/>
            <person name="Miyake S."/>
            <person name="Morris K."/>
            <person name="Mottagui-Tabar S."/>
            <person name="Mulder N."/>
            <person name="Nakano N."/>
            <person name="Nakauchi H."/>
            <person name="Ng P."/>
            <person name="Nilsson R."/>
            <person name="Nishiguchi S."/>
            <person name="Nishikawa S."/>
            <person name="Nori F."/>
            <person name="Ohara O."/>
            <person name="Okazaki Y."/>
            <person name="Orlando V."/>
            <person name="Pang K.C."/>
            <person name="Pavan W.J."/>
            <person name="Pavesi G."/>
            <person name="Pesole G."/>
            <person name="Petrovsky N."/>
            <person name="Piazza S."/>
            <person name="Reed J."/>
            <person name="Reid J.F."/>
            <person name="Ring B.Z."/>
            <person name="Ringwald M."/>
            <person name="Rost B."/>
            <person name="Ruan Y."/>
            <person name="Salzberg S.L."/>
            <person name="Sandelin A."/>
            <person name="Schneider C."/>
            <person name="Schoenbach C."/>
            <person name="Sekiguchi K."/>
            <person name="Semple C.A."/>
            <person name="Seno S."/>
            <person name="Sessa L."/>
            <person name="Sheng Y."/>
            <person name="Shibata Y."/>
            <person name="Shimada H."/>
            <person name="Shimada K."/>
            <person name="Silva D."/>
            <person name="Sinclair B."/>
            <person name="Sperling S."/>
            <person name="Stupka E."/>
            <person name="Sugiura K."/>
            <person name="Sultana R."/>
            <person name="Takenaka Y."/>
            <person name="Taki K."/>
            <person name="Tammoja K."/>
            <person name="Tan S.L."/>
            <person name="Tang S."/>
            <person name="Taylor M.S."/>
            <person name="Tegner J."/>
            <person name="Teichmann S.A."/>
            <person name="Ueda H.R."/>
            <person name="van Nimwegen E."/>
            <person name="Verardo R."/>
            <person name="Wei C.L."/>
            <person name="Yagi K."/>
            <person name="Yamanishi H."/>
            <person name="Zabarovsky E."/>
            <person name="Zhu S."/>
            <person name="Zimmer A."/>
            <person name="Hide W."/>
            <person name="Bult C."/>
            <person name="Grimmond S.M."/>
            <person name="Teasdale R.D."/>
            <person name="Liu E.T."/>
            <person name="Brusic V."/>
            <person name="Quackenbush J."/>
            <person name="Wahlestedt C."/>
            <person name="Mattick J.S."/>
            <person name="Hume D.A."/>
            <person name="Kai C."/>
            <person name="Sasaki D."/>
            <person name="Tomaru Y."/>
            <person name="Fukuda S."/>
            <person name="Kanamori-Katayama M."/>
            <person name="Suzuki M."/>
            <person name="Aoki J."/>
            <person name="Arakawa T."/>
            <person name="Iida J."/>
            <person name="Imamura K."/>
            <person name="Itoh M."/>
            <person name="Kato T."/>
            <person name="Kawaji H."/>
            <person name="Kawagashira N."/>
            <person name="Kawashima T."/>
            <person name="Kojima M."/>
            <person name="Kondo S."/>
            <person name="Konno H."/>
            <person name="Nakano K."/>
            <person name="Ninomiya N."/>
            <person name="Nishio T."/>
            <person name="Okada M."/>
            <person name="Plessy C."/>
            <person name="Shibata K."/>
            <person name="Shiraki T."/>
            <person name="Suzuki S."/>
            <person name="Tagami M."/>
            <person name="Waki K."/>
            <person name="Watahiki A."/>
            <person name="Okamura-Oho Y."/>
            <person name="Suzuki H."/>
            <person name="Kawai J."/>
            <person name="Hayashizaki Y."/>
        </authorList>
    </citation>
    <scope>NUCLEOTIDE SEQUENCE [LARGE SCALE MRNA]</scope>
    <source>
        <strain>C57BL/6J</strain>
        <tissue>Amnion</tissue>
    </source>
</reference>
<reference key="3">
    <citation type="journal article" date="2009" name="PLoS Biol.">
        <title>Lineage-specific biology revealed by a finished genome assembly of the mouse.</title>
        <authorList>
            <person name="Church D.M."/>
            <person name="Goodstadt L."/>
            <person name="Hillier L.W."/>
            <person name="Zody M.C."/>
            <person name="Goldstein S."/>
            <person name="She X."/>
            <person name="Bult C.J."/>
            <person name="Agarwala R."/>
            <person name="Cherry J.L."/>
            <person name="DiCuccio M."/>
            <person name="Hlavina W."/>
            <person name="Kapustin Y."/>
            <person name="Meric P."/>
            <person name="Maglott D."/>
            <person name="Birtle Z."/>
            <person name="Marques A.C."/>
            <person name="Graves T."/>
            <person name="Zhou S."/>
            <person name="Teague B."/>
            <person name="Potamousis K."/>
            <person name="Churas C."/>
            <person name="Place M."/>
            <person name="Herschleb J."/>
            <person name="Runnheim R."/>
            <person name="Forrest D."/>
            <person name="Amos-Landgraf J."/>
            <person name="Schwartz D.C."/>
            <person name="Cheng Z."/>
            <person name="Lindblad-Toh K."/>
            <person name="Eichler E.E."/>
            <person name="Ponting C.P."/>
        </authorList>
    </citation>
    <scope>NUCLEOTIDE SEQUENCE [LARGE SCALE GENOMIC DNA]</scope>
    <source>
        <strain>C57BL/6J</strain>
    </source>
</reference>
<reference key="4">
    <citation type="submission" date="2005-07" db="EMBL/GenBank/DDBJ databases">
        <authorList>
            <person name="Mural R.J."/>
            <person name="Adams M.D."/>
            <person name="Myers E.W."/>
            <person name="Smith H.O."/>
            <person name="Venter J.C."/>
        </authorList>
    </citation>
    <scope>NUCLEOTIDE SEQUENCE [LARGE SCALE GENOMIC DNA]</scope>
</reference>
<reference key="5">
    <citation type="journal article" date="2004" name="Genome Res.">
        <title>The status, quality, and expansion of the NIH full-length cDNA project: the Mammalian Gene Collection (MGC).</title>
        <authorList>
            <consortium name="The MGC Project Team"/>
        </authorList>
    </citation>
    <scope>NUCLEOTIDE SEQUENCE [LARGE SCALE MRNA]</scope>
    <source>
        <strain>C57BL/6J</strain>
        <tissue>Brain</tissue>
    </source>
</reference>
<reference key="6">
    <citation type="journal article" date="2000" name="Proc. Natl. Acad. Sci. U.S.A.">
        <title>A mammalian germ cell-specific RNA-binding protein interacts with ubiquitously expressed proteins involved in splice site selection.</title>
        <authorList>
            <person name="Elliott D.J."/>
            <person name="Bourgeois C.F."/>
            <person name="Klink A."/>
            <person name="Stevenin J."/>
            <person name="Cooke H.J."/>
        </authorList>
    </citation>
    <scope>INTERACTION WITH RBMY</scope>
</reference>
<reference key="7">
    <citation type="journal article" date="2008" name="Cytogenet. Genome Res.">
        <title>PHF5A represents a bridge protein between splicing proteins and ATP-dependent helicases and is differentially expressed during mouse spermatogenesis.</title>
        <authorList>
            <person name="Rzymski T."/>
            <person name="Grzmil P."/>
            <person name="Meinhardt A."/>
            <person name="Wolf S."/>
            <person name="Burfeind P."/>
        </authorList>
    </citation>
    <scope>INTERACTION WITH PHF5A</scope>
</reference>
<reference key="8">
    <citation type="journal article" date="2010" name="Cell">
        <title>A tissue-specific atlas of mouse protein phosphorylation and expression.</title>
        <authorList>
            <person name="Huttlin E.L."/>
            <person name="Jedrychowski M.P."/>
            <person name="Elias J.E."/>
            <person name="Goswami T."/>
            <person name="Rad R."/>
            <person name="Beausoleil S.A."/>
            <person name="Villen J."/>
            <person name="Haas W."/>
            <person name="Sowa M.E."/>
            <person name="Gygi S.P."/>
        </authorList>
    </citation>
    <scope>IDENTIFICATION BY MASS SPECTROMETRY [LARGE SCALE ANALYSIS]</scope>
    <source>
        <tissue>Spleen</tissue>
        <tissue>Testis</tissue>
    </source>
</reference>
<reference key="9">
    <citation type="journal article" date="2013" name="Mol. Cell">
        <title>SIRT5-mediated lysine desuccinylation impacts diverse metabolic pathways.</title>
        <authorList>
            <person name="Park J."/>
            <person name="Chen Y."/>
            <person name="Tishkoff D.X."/>
            <person name="Peng C."/>
            <person name="Tan M."/>
            <person name="Dai L."/>
            <person name="Xie Z."/>
            <person name="Zhang Y."/>
            <person name="Zwaans B.M."/>
            <person name="Skinner M.E."/>
            <person name="Lombard D.B."/>
            <person name="Zhao Y."/>
        </authorList>
    </citation>
    <scope>ACETYLATION [LARGE SCALE ANALYSIS] AT LYS-167</scope>
    <scope>IDENTIFICATION BY MASS SPECTROMETRY [LARGE SCALE ANALYSIS]</scope>
    <source>
        <tissue>Embryonic fibroblast</tissue>
    </source>
</reference>
<evidence type="ECO:0000250" key="1"/>
<evidence type="ECO:0000250" key="2">
    <source>
        <dbReference type="UniProtKB" id="Q13243"/>
    </source>
</evidence>
<evidence type="ECO:0000255" key="3">
    <source>
        <dbReference type="PROSITE-ProRule" id="PRU00176"/>
    </source>
</evidence>
<evidence type="ECO:0000256" key="4">
    <source>
        <dbReference type="SAM" id="MobiDB-lite"/>
    </source>
</evidence>
<evidence type="ECO:0000269" key="5">
    <source>
    </source>
</evidence>
<evidence type="ECO:0000269" key="6">
    <source>
    </source>
</evidence>
<evidence type="ECO:0000305" key="7"/>
<evidence type="ECO:0007744" key="8">
    <source>
    </source>
</evidence>